<reference key="1">
    <citation type="journal article" date="2002" name="Nature">
        <title>Sequence and analysis of chromosome 2 of Dictyostelium discoideum.</title>
        <authorList>
            <person name="Gloeckner G."/>
            <person name="Eichinger L."/>
            <person name="Szafranski K."/>
            <person name="Pachebat J.A."/>
            <person name="Bankier A.T."/>
            <person name="Dear P.H."/>
            <person name="Lehmann R."/>
            <person name="Baumgart C."/>
            <person name="Parra G."/>
            <person name="Abril J.F."/>
            <person name="Guigo R."/>
            <person name="Kumpf K."/>
            <person name="Tunggal B."/>
            <person name="Cox E.C."/>
            <person name="Quail M.A."/>
            <person name="Platzer M."/>
            <person name="Rosenthal A."/>
            <person name="Noegel A.A."/>
        </authorList>
    </citation>
    <scope>NUCLEOTIDE SEQUENCE [LARGE SCALE GENOMIC DNA]</scope>
    <source>
        <strain>AX4</strain>
    </source>
</reference>
<reference key="2">
    <citation type="journal article" date="2005" name="Nature">
        <title>The genome of the social amoeba Dictyostelium discoideum.</title>
        <authorList>
            <person name="Eichinger L."/>
            <person name="Pachebat J.A."/>
            <person name="Gloeckner G."/>
            <person name="Rajandream M.A."/>
            <person name="Sucgang R."/>
            <person name="Berriman M."/>
            <person name="Song J."/>
            <person name="Olsen R."/>
            <person name="Szafranski K."/>
            <person name="Xu Q."/>
            <person name="Tunggal B."/>
            <person name="Kummerfeld S."/>
            <person name="Madera M."/>
            <person name="Konfortov B.A."/>
            <person name="Rivero F."/>
            <person name="Bankier A.T."/>
            <person name="Lehmann R."/>
            <person name="Hamlin N."/>
            <person name="Davies R."/>
            <person name="Gaudet P."/>
            <person name="Fey P."/>
            <person name="Pilcher K."/>
            <person name="Chen G."/>
            <person name="Saunders D."/>
            <person name="Sodergren E.J."/>
            <person name="Davis P."/>
            <person name="Kerhornou A."/>
            <person name="Nie X."/>
            <person name="Hall N."/>
            <person name="Anjard C."/>
            <person name="Hemphill L."/>
            <person name="Bason N."/>
            <person name="Farbrother P."/>
            <person name="Desany B."/>
            <person name="Just E."/>
            <person name="Morio T."/>
            <person name="Rost R."/>
            <person name="Churcher C.M."/>
            <person name="Cooper J."/>
            <person name="Haydock S."/>
            <person name="van Driessche N."/>
            <person name="Cronin A."/>
            <person name="Goodhead I."/>
            <person name="Muzny D.M."/>
            <person name="Mourier T."/>
            <person name="Pain A."/>
            <person name="Lu M."/>
            <person name="Harper D."/>
            <person name="Lindsay R."/>
            <person name="Hauser H."/>
            <person name="James K.D."/>
            <person name="Quiles M."/>
            <person name="Madan Babu M."/>
            <person name="Saito T."/>
            <person name="Buchrieser C."/>
            <person name="Wardroper A."/>
            <person name="Felder M."/>
            <person name="Thangavelu M."/>
            <person name="Johnson D."/>
            <person name="Knights A."/>
            <person name="Loulseged H."/>
            <person name="Mungall K.L."/>
            <person name="Oliver K."/>
            <person name="Price C."/>
            <person name="Quail M.A."/>
            <person name="Urushihara H."/>
            <person name="Hernandez J."/>
            <person name="Rabbinowitsch E."/>
            <person name="Steffen D."/>
            <person name="Sanders M."/>
            <person name="Ma J."/>
            <person name="Kohara Y."/>
            <person name="Sharp S."/>
            <person name="Simmonds M.N."/>
            <person name="Spiegler S."/>
            <person name="Tivey A."/>
            <person name="Sugano S."/>
            <person name="White B."/>
            <person name="Walker D."/>
            <person name="Woodward J.R."/>
            <person name="Winckler T."/>
            <person name="Tanaka Y."/>
            <person name="Shaulsky G."/>
            <person name="Schleicher M."/>
            <person name="Weinstock G.M."/>
            <person name="Rosenthal A."/>
            <person name="Cox E.C."/>
            <person name="Chisholm R.L."/>
            <person name="Gibbs R.A."/>
            <person name="Loomis W.F."/>
            <person name="Platzer M."/>
            <person name="Kay R.R."/>
            <person name="Williams J.G."/>
            <person name="Dear P.H."/>
            <person name="Noegel A.A."/>
            <person name="Barrell B.G."/>
            <person name="Kuspa A."/>
        </authorList>
    </citation>
    <scope>NUCLEOTIDE SEQUENCE [LARGE SCALE GENOMIC DNA]</scope>
    <source>
        <strain>AX4</strain>
    </source>
</reference>
<feature type="chain" id="PRO_0000348142" description="Uncharacterized protein DDB_G0276231">
    <location>
        <begin position="1"/>
        <end position="51"/>
    </location>
</feature>
<name>Y7757_DICDI</name>
<keyword id="KW-1185">Reference proteome</keyword>
<protein>
    <recommendedName>
        <fullName>Uncharacterized protein DDB_G0276231</fullName>
    </recommendedName>
</protein>
<gene>
    <name type="ORF">DDB_G0276231</name>
</gene>
<proteinExistence type="predicted"/>
<sequence length="51" mass="5708">MTLFESLRSISSFSNEKNQKLNSKTNISSTTFSINSFENNNICFNGGVCPR</sequence>
<organism>
    <name type="scientific">Dictyostelium discoideum</name>
    <name type="common">Social amoeba</name>
    <dbReference type="NCBI Taxonomy" id="44689"/>
    <lineage>
        <taxon>Eukaryota</taxon>
        <taxon>Amoebozoa</taxon>
        <taxon>Evosea</taxon>
        <taxon>Eumycetozoa</taxon>
        <taxon>Dictyostelia</taxon>
        <taxon>Dictyosteliales</taxon>
        <taxon>Dictyosteliaceae</taxon>
        <taxon>Dictyostelium</taxon>
    </lineage>
</organism>
<dbReference type="EMBL" id="AAFI02000014">
    <property type="protein sequence ID" value="EAL69415.1"/>
    <property type="molecule type" value="Genomic_DNA"/>
</dbReference>
<dbReference type="RefSeq" id="XP_643244.1">
    <property type="nucleotide sequence ID" value="XM_638152.1"/>
</dbReference>
<dbReference type="SMR" id="Q75JF4"/>
<dbReference type="PaxDb" id="44689-DDB0217757"/>
<dbReference type="EnsemblProtists" id="EAL69415">
    <property type="protein sequence ID" value="EAL69415"/>
    <property type="gene ID" value="DDB_G0276231"/>
</dbReference>
<dbReference type="GeneID" id="8620287"/>
<dbReference type="KEGG" id="ddi:DDB_G0276231"/>
<dbReference type="dictyBase" id="DDB_G0276231"/>
<dbReference type="HOGENOM" id="CLU_3110390_0_0_1"/>
<dbReference type="InParanoid" id="Q75JF4"/>
<dbReference type="PRO" id="PR:Q75JF4"/>
<dbReference type="Proteomes" id="UP000002195">
    <property type="component" value="Chromosome 2"/>
</dbReference>
<accession>Q75JF4</accession>
<accession>Q552G6</accession>